<evidence type="ECO:0000250" key="1">
    <source>
        <dbReference type="UniProtKB" id="P22110"/>
    </source>
</evidence>
<evidence type="ECO:0000250" key="2">
    <source>
        <dbReference type="UniProtKB" id="P22112"/>
    </source>
</evidence>
<evidence type="ECO:0000255" key="3"/>
<evidence type="ECO:0000305" key="4"/>
<name>SH_MUMP2</name>
<organismHost>
    <name type="scientific">Homo sapiens</name>
    <name type="common">Human</name>
    <dbReference type="NCBI Taxonomy" id="9606"/>
</organismHost>
<proteinExistence type="inferred from homology"/>
<comment type="function">
    <text evidence="2">Plays a role in the inhibition of the host NF-kappa-B pathway. This inhibition occurs at the receptor level, by preventing the signaling of TNFR1 as well as IL-1R and TLR3.</text>
</comment>
<comment type="subunit">
    <text evidence="1 2">Interacts with host TNFRSF1A, RIPK1 and IRAK1; these interactions interfere with host NF-kappa-B activation at the level of receptor complexes (By similarity). Interacts with host protein UBQLN4 (By similarity).</text>
</comment>
<comment type="subcellular location">
    <subcellularLocation>
        <location evidence="2">Virion membrane</location>
        <topology evidence="2">Single-pass membrane protein</topology>
    </subcellularLocation>
    <subcellularLocation>
        <location evidence="2">Host cell membrane</location>
        <topology evidence="2">Single-pass membrane protein</topology>
    </subcellularLocation>
</comment>
<comment type="similarity">
    <text evidence="4">Belongs to the rubulavirus small hydrophobic protein family.</text>
</comment>
<organism>
    <name type="scientific">Mumps virus (strain Edingburgh 2)</name>
    <name type="common">MuV</name>
    <dbReference type="NCBI Taxonomy" id="11162"/>
    <lineage>
        <taxon>Viruses</taxon>
        <taxon>Riboviria</taxon>
        <taxon>Orthornavirae</taxon>
        <taxon>Negarnaviricota</taxon>
        <taxon>Haploviricotina</taxon>
        <taxon>Monjiviricetes</taxon>
        <taxon>Mononegavirales</taxon>
        <taxon>Paramyxoviridae</taxon>
        <taxon>Rubulavirinae</taxon>
        <taxon>Orthorubulavirus</taxon>
        <taxon>Orthorubulavirus parotitidis</taxon>
        <taxon>Mumps orthorubulavirus</taxon>
    </lineage>
</organism>
<dbReference type="EMBL" id="X63711">
    <property type="protein sequence ID" value="CAA45244.1"/>
    <property type="molecule type" value="Genomic_RNA"/>
</dbReference>
<dbReference type="PIR" id="S19868">
    <property type="entry name" value="SHNZE2"/>
</dbReference>
<dbReference type="SMR" id="P69187"/>
<dbReference type="GO" id="GO:0020002">
    <property type="term" value="C:host cell plasma membrane"/>
    <property type="evidence" value="ECO:0007669"/>
    <property type="project" value="UniProtKB-SubCell"/>
</dbReference>
<dbReference type="GO" id="GO:0016020">
    <property type="term" value="C:membrane"/>
    <property type="evidence" value="ECO:0007669"/>
    <property type="project" value="UniProtKB-KW"/>
</dbReference>
<dbReference type="GO" id="GO:0055036">
    <property type="term" value="C:virion membrane"/>
    <property type="evidence" value="ECO:0007669"/>
    <property type="project" value="UniProtKB-SubCell"/>
</dbReference>
<dbReference type="GO" id="GO:0085034">
    <property type="term" value="P:symbiont-mediated suppression of host NF-kappaB cascade"/>
    <property type="evidence" value="ECO:0007669"/>
    <property type="project" value="UniProtKB-KW"/>
</dbReference>
<dbReference type="InterPro" id="IPR001477">
    <property type="entry name" value="SH"/>
</dbReference>
<dbReference type="Pfam" id="PF01445">
    <property type="entry name" value="SH"/>
    <property type="match status" value="1"/>
</dbReference>
<dbReference type="PIRSF" id="PIRSF003923">
    <property type="entry name" value="SH"/>
    <property type="match status" value="1"/>
</dbReference>
<feature type="chain" id="PRO_0000142874" description="Small hydrophobic protein">
    <location>
        <begin position="1"/>
        <end position="57"/>
    </location>
</feature>
<feature type="topological domain" description="Virion surface" evidence="3">
    <location>
        <begin position="1"/>
        <end position="8"/>
    </location>
</feature>
<feature type="transmembrane region" description="Helical" evidence="3">
    <location>
        <begin position="9"/>
        <end position="29"/>
    </location>
</feature>
<feature type="topological domain" description="Intravirion" evidence="3">
    <location>
        <begin position="30"/>
        <end position="57"/>
    </location>
</feature>
<gene>
    <name type="primary">SH</name>
</gene>
<keyword id="KW-1032">Host cell membrane</keyword>
<keyword id="KW-1043">Host membrane</keyword>
<keyword id="KW-0945">Host-virus interaction</keyword>
<keyword id="KW-1100">Inhibition of host NF-kappa-B by virus</keyword>
<keyword id="KW-0472">Membrane</keyword>
<keyword id="KW-0812">Transmembrane</keyword>
<keyword id="KW-1133">Transmembrane helix</keyword>
<keyword id="KW-0946">Virion</keyword>
<sequence length="57" mass="6894">MPLIQPPLYLTFLLLMLLYRIITLYVWSLSTITYKTSVRHASLYQRSFFRWSVDHSL</sequence>
<reference key="1">
    <citation type="journal article" date="1993" name="Arch. Virol.">
        <title>Identification of a new mumps virus lineage by nucleotide sequence analysis of the SH gene of ten different strains.</title>
        <authorList>
            <person name="Yeo R.P."/>
            <person name="Afzal M.A."/>
            <person name="Forsey T."/>
            <person name="Rima B.K."/>
        </authorList>
    </citation>
    <scope>NUCLEOTIDE SEQUENCE [GENOMIC RNA]</scope>
</reference>
<accession>P69187</accession>
<accession>P28084</accession>
<protein>
    <recommendedName>
        <fullName>Small hydrophobic protein</fullName>
    </recommendedName>
</protein>